<comment type="function">
    <text>Involved in osmoadaptation.</text>
</comment>
<comment type="induction">
    <text evidence="2">Up-regulated when grown with elevated levels of potassium chloride.</text>
</comment>
<accession>Q5B288</accession>
<accession>C8VGT4</accession>
<evidence type="ECO:0000256" key="1">
    <source>
        <dbReference type="SAM" id="MobiDB-lite"/>
    </source>
</evidence>
<evidence type="ECO:0000269" key="2">
    <source>
    </source>
</evidence>
<feature type="chain" id="PRO_0000348272" description="Uncharacterized protein AN5342">
    <location>
        <begin position="1"/>
        <end position="467"/>
    </location>
</feature>
<feature type="region of interest" description="Disordered" evidence="1">
    <location>
        <begin position="1"/>
        <end position="60"/>
    </location>
</feature>
<organism>
    <name type="scientific">Emericella nidulans (strain FGSC A4 / ATCC 38163 / CBS 112.46 / NRRL 194 / M139)</name>
    <name type="common">Aspergillus nidulans</name>
    <dbReference type="NCBI Taxonomy" id="227321"/>
    <lineage>
        <taxon>Eukaryota</taxon>
        <taxon>Fungi</taxon>
        <taxon>Dikarya</taxon>
        <taxon>Ascomycota</taxon>
        <taxon>Pezizomycotina</taxon>
        <taxon>Eurotiomycetes</taxon>
        <taxon>Eurotiomycetidae</taxon>
        <taxon>Eurotiales</taxon>
        <taxon>Aspergillaceae</taxon>
        <taxon>Aspergillus</taxon>
        <taxon>Aspergillus subgen. Nidulantes</taxon>
    </lineage>
</organism>
<sequence>MVRVSRGCQSCVDAKLQSTPSPSPSKSPSPTESPEQCLQKRQSGEQVVLPSRPFPRTSPRAEYRPVPLLALDGYINPSLTVTAVNSQQAQVFTNYVLASFPCFFRCTETRVPVNWVEYVDQRGSSMNSCFDWAVRACTSAYLGSLHDDQRYLVASRSLYHRALRGLGNLLSSEKTAKSDEVLASAIVLAIFEKHNCSSPDAWLRHAAGIRTLMKLRGPKAHLEGFGRAMYIVYRNFLITAALVEGEACFLEEPEWQALNEEIAASDAKLPTSSLYTDVVERGFLSVIKIPGLVKRTRELQCLSSKKRAEVQPALLQDVQATRAGLRGIYTEFGVAVSMLRSGQDENDTFVGPVPNFFFEGYSSLFARGVRLGLLILNYLIVIMDPKQRATIDSENFMLLNDMTRSQRSTHPALEFKLPLTPPKSPGRPGLVVRSLITEETREPPTTDWMDRITSTMGLEAVHVSLVG</sequence>
<gene>
    <name type="ORF">AN5342</name>
</gene>
<reference key="1">
    <citation type="journal article" date="2005" name="Nature">
        <title>Sequencing of Aspergillus nidulans and comparative analysis with A. fumigatus and A. oryzae.</title>
        <authorList>
            <person name="Galagan J.E."/>
            <person name="Calvo S.E."/>
            <person name="Cuomo C."/>
            <person name="Ma L.-J."/>
            <person name="Wortman J.R."/>
            <person name="Batzoglou S."/>
            <person name="Lee S.-I."/>
            <person name="Bastuerkmen M."/>
            <person name="Spevak C.C."/>
            <person name="Clutterbuck J."/>
            <person name="Kapitonov V."/>
            <person name="Jurka J."/>
            <person name="Scazzocchio C."/>
            <person name="Farman M.L."/>
            <person name="Butler J."/>
            <person name="Purcell S."/>
            <person name="Harris S."/>
            <person name="Braus G.H."/>
            <person name="Draht O."/>
            <person name="Busch S."/>
            <person name="D'Enfert C."/>
            <person name="Bouchier C."/>
            <person name="Goldman G.H."/>
            <person name="Bell-Pedersen D."/>
            <person name="Griffiths-Jones S."/>
            <person name="Doonan J.H."/>
            <person name="Yu J."/>
            <person name="Vienken K."/>
            <person name="Pain A."/>
            <person name="Freitag M."/>
            <person name="Selker E.U."/>
            <person name="Archer D.B."/>
            <person name="Penalva M.A."/>
            <person name="Oakley B.R."/>
            <person name="Momany M."/>
            <person name="Tanaka T."/>
            <person name="Kumagai T."/>
            <person name="Asai K."/>
            <person name="Machida M."/>
            <person name="Nierman W.C."/>
            <person name="Denning D.W."/>
            <person name="Caddick M.X."/>
            <person name="Hynes M."/>
            <person name="Paoletti M."/>
            <person name="Fischer R."/>
            <person name="Miller B.L."/>
            <person name="Dyer P.S."/>
            <person name="Sachs M.S."/>
            <person name="Osmani S.A."/>
            <person name="Birren B.W."/>
        </authorList>
    </citation>
    <scope>NUCLEOTIDE SEQUENCE [LARGE SCALE GENOMIC DNA]</scope>
    <source>
        <strain>FGSC A4 / ATCC 38163 / CBS 112.46 / NRRL 194 / M139</strain>
    </source>
</reference>
<reference key="2">
    <citation type="journal article" date="2009" name="Fungal Genet. Biol.">
        <title>The 2008 update of the Aspergillus nidulans genome annotation: a community effort.</title>
        <authorList>
            <person name="Wortman J.R."/>
            <person name="Gilsenan J.M."/>
            <person name="Joardar V."/>
            <person name="Deegan J."/>
            <person name="Clutterbuck J."/>
            <person name="Andersen M.R."/>
            <person name="Archer D."/>
            <person name="Bencina M."/>
            <person name="Braus G."/>
            <person name="Coutinho P."/>
            <person name="von Dohren H."/>
            <person name="Doonan J."/>
            <person name="Driessen A.J."/>
            <person name="Durek P."/>
            <person name="Espeso E."/>
            <person name="Fekete E."/>
            <person name="Flipphi M."/>
            <person name="Estrada C.G."/>
            <person name="Geysens S."/>
            <person name="Goldman G."/>
            <person name="de Groot P.W."/>
            <person name="Hansen K."/>
            <person name="Harris S.D."/>
            <person name="Heinekamp T."/>
            <person name="Helmstaedt K."/>
            <person name="Henrissat B."/>
            <person name="Hofmann G."/>
            <person name="Homan T."/>
            <person name="Horio T."/>
            <person name="Horiuchi H."/>
            <person name="James S."/>
            <person name="Jones M."/>
            <person name="Karaffa L."/>
            <person name="Karanyi Z."/>
            <person name="Kato M."/>
            <person name="Keller N."/>
            <person name="Kelly D.E."/>
            <person name="Kiel J.A."/>
            <person name="Kim J.M."/>
            <person name="van der Klei I.J."/>
            <person name="Klis F.M."/>
            <person name="Kovalchuk A."/>
            <person name="Krasevec N."/>
            <person name="Kubicek C.P."/>
            <person name="Liu B."/>
            <person name="Maccabe A."/>
            <person name="Meyer V."/>
            <person name="Mirabito P."/>
            <person name="Miskei M."/>
            <person name="Mos M."/>
            <person name="Mullins J."/>
            <person name="Nelson D.R."/>
            <person name="Nielsen J."/>
            <person name="Oakley B.R."/>
            <person name="Osmani S.A."/>
            <person name="Pakula T."/>
            <person name="Paszewski A."/>
            <person name="Paulsen I."/>
            <person name="Pilsyk S."/>
            <person name="Pocsi I."/>
            <person name="Punt P.J."/>
            <person name="Ram A.F."/>
            <person name="Ren Q."/>
            <person name="Robellet X."/>
            <person name="Robson G."/>
            <person name="Seiboth B."/>
            <person name="van Solingen P."/>
            <person name="Specht T."/>
            <person name="Sun J."/>
            <person name="Taheri-Talesh N."/>
            <person name="Takeshita N."/>
            <person name="Ussery D."/>
            <person name="vanKuyk P.A."/>
            <person name="Visser H."/>
            <person name="van de Vondervoort P.J."/>
            <person name="de Vries R.P."/>
            <person name="Walton J."/>
            <person name="Xiang X."/>
            <person name="Xiong Y."/>
            <person name="Zeng A.P."/>
            <person name="Brandt B.W."/>
            <person name="Cornell M.J."/>
            <person name="van den Hondel C.A."/>
            <person name="Visser J."/>
            <person name="Oliver S.G."/>
            <person name="Turner G."/>
        </authorList>
    </citation>
    <scope>GENOME REANNOTATION</scope>
    <source>
        <strain>FGSC A4 / ATCC 38163 / CBS 112.46 / NRRL 194 / M139</strain>
    </source>
</reference>
<reference key="3">
    <citation type="journal article" date="2007" name="Fungal Genet. Biol.">
        <title>Proteome map of Aspergillus nidulans during osmoadaptation.</title>
        <authorList>
            <person name="Kim Y."/>
            <person name="Nandakumar M.P."/>
            <person name="Marten M.R."/>
        </authorList>
    </citation>
    <scope>INDUCTION</scope>
    <scope>IDENTIFICATION BY MASS SPECTROMETRY</scope>
</reference>
<dbReference type="EMBL" id="AACD01000093">
    <property type="protein sequence ID" value="EAA62502.1"/>
    <property type="molecule type" value="Genomic_DNA"/>
</dbReference>
<dbReference type="EMBL" id="BN001305">
    <property type="protein sequence ID" value="CBF82069.1"/>
    <property type="molecule type" value="Genomic_DNA"/>
</dbReference>
<dbReference type="RefSeq" id="XP_662946.1">
    <property type="nucleotide sequence ID" value="XM_657854.1"/>
</dbReference>
<dbReference type="SMR" id="Q5B288"/>
<dbReference type="EnsemblFungi" id="CBF82069">
    <property type="protein sequence ID" value="CBF82069"/>
    <property type="gene ID" value="ANIA_05342"/>
</dbReference>
<dbReference type="KEGG" id="ani:ANIA_05342"/>
<dbReference type="eggNOG" id="ENOG502SIT5">
    <property type="taxonomic scope" value="Eukaryota"/>
</dbReference>
<dbReference type="HOGENOM" id="CLU_021599_4_0_1"/>
<dbReference type="InParanoid" id="Q5B288"/>
<dbReference type="OMA" id="KCTETRV"/>
<dbReference type="OrthoDB" id="191686at2759"/>
<dbReference type="Proteomes" id="UP000000560">
    <property type="component" value="Chromosome V"/>
</dbReference>
<dbReference type="InterPro" id="IPR021858">
    <property type="entry name" value="Fun_TF"/>
</dbReference>
<dbReference type="InterPro" id="IPR053178">
    <property type="entry name" value="Osmoadaptation_assoc"/>
</dbReference>
<dbReference type="PANTHER" id="PTHR38111:SF10">
    <property type="entry name" value="C6 FINGER DOMAIN-CONTAINING PROTEIN"/>
    <property type="match status" value="1"/>
</dbReference>
<dbReference type="PANTHER" id="PTHR38111">
    <property type="entry name" value="ZN(2)-C6 FUNGAL-TYPE DOMAIN-CONTAINING PROTEIN-RELATED"/>
    <property type="match status" value="1"/>
</dbReference>
<dbReference type="Pfam" id="PF11951">
    <property type="entry name" value="Fungal_trans_2"/>
    <property type="match status" value="1"/>
</dbReference>
<proteinExistence type="evidence at protein level"/>
<name>Y5342_EMENI</name>
<keyword id="KW-1185">Reference proteome</keyword>
<keyword id="KW-0346">Stress response</keyword>
<protein>
    <recommendedName>
        <fullName>Uncharacterized protein AN5342</fullName>
    </recommendedName>
</protein>